<evidence type="ECO:0000255" key="1">
    <source>
        <dbReference type="HAMAP-Rule" id="MF_01940"/>
    </source>
</evidence>
<organism>
    <name type="scientific">Methanothermobacter thermautotrophicus (strain ATCC 29096 / DSM 1053 / JCM 10044 / NBRC 100330 / Delta H)</name>
    <name type="common">Methanobacterium thermoautotrophicum</name>
    <dbReference type="NCBI Taxonomy" id="187420"/>
    <lineage>
        <taxon>Archaea</taxon>
        <taxon>Methanobacteriati</taxon>
        <taxon>Methanobacteriota</taxon>
        <taxon>Methanomada group</taxon>
        <taxon>Methanobacteria</taxon>
        <taxon>Methanobacteriales</taxon>
        <taxon>Methanobacteriaceae</taxon>
        <taxon>Methanothermobacter</taxon>
    </lineage>
</organism>
<proteinExistence type="inferred from homology"/>
<name>THPR_METTH</name>
<dbReference type="EC" id="3.1.4.58" evidence="1"/>
<dbReference type="EMBL" id="AE000666">
    <property type="protein sequence ID" value="AAB85089.1"/>
    <property type="molecule type" value="Genomic_DNA"/>
</dbReference>
<dbReference type="PIR" id="C69177">
    <property type="entry name" value="C69177"/>
</dbReference>
<dbReference type="SMR" id="O26683"/>
<dbReference type="FunCoup" id="O26683">
    <property type="interactions" value="2"/>
</dbReference>
<dbReference type="STRING" id="187420.MTH_583"/>
<dbReference type="PaxDb" id="187420-MTH_583"/>
<dbReference type="EnsemblBacteria" id="AAB85089">
    <property type="protein sequence ID" value="AAB85089"/>
    <property type="gene ID" value="MTH_583"/>
</dbReference>
<dbReference type="KEGG" id="mth:MTH_583"/>
<dbReference type="PATRIC" id="fig|187420.15.peg.562"/>
<dbReference type="HOGENOM" id="CLU_081251_3_4_2"/>
<dbReference type="InParanoid" id="O26683"/>
<dbReference type="Proteomes" id="UP000005223">
    <property type="component" value="Chromosome"/>
</dbReference>
<dbReference type="GO" id="GO:0004113">
    <property type="term" value="F:2',3'-cyclic-nucleotide 3'-phosphodiesterase activity"/>
    <property type="evidence" value="ECO:0007669"/>
    <property type="project" value="InterPro"/>
</dbReference>
<dbReference type="GO" id="GO:0008664">
    <property type="term" value="F:RNA 2',3'-cyclic 3'-phosphodiesterase activity"/>
    <property type="evidence" value="ECO:0007669"/>
    <property type="project" value="UniProtKB-EC"/>
</dbReference>
<dbReference type="Gene3D" id="3.90.1140.10">
    <property type="entry name" value="Cyclic phosphodiesterase"/>
    <property type="match status" value="1"/>
</dbReference>
<dbReference type="HAMAP" id="MF_01940">
    <property type="entry name" value="RNA_CPDase"/>
    <property type="match status" value="1"/>
</dbReference>
<dbReference type="InterPro" id="IPR009097">
    <property type="entry name" value="Cyclic_Pdiesterase"/>
</dbReference>
<dbReference type="InterPro" id="IPR004175">
    <property type="entry name" value="RNA_CPDase"/>
</dbReference>
<dbReference type="NCBIfam" id="TIGR02258">
    <property type="entry name" value="2_5_ligase"/>
    <property type="match status" value="1"/>
</dbReference>
<dbReference type="PANTHER" id="PTHR35561">
    <property type="entry name" value="RNA 2',3'-CYCLIC PHOSPHODIESTERASE"/>
    <property type="match status" value="1"/>
</dbReference>
<dbReference type="PANTHER" id="PTHR35561:SF1">
    <property type="entry name" value="RNA 2',3'-CYCLIC PHOSPHODIESTERASE"/>
    <property type="match status" value="1"/>
</dbReference>
<dbReference type="Pfam" id="PF13563">
    <property type="entry name" value="2_5_RNA_ligase2"/>
    <property type="match status" value="1"/>
</dbReference>
<dbReference type="SUPFAM" id="SSF55144">
    <property type="entry name" value="LigT-like"/>
    <property type="match status" value="1"/>
</dbReference>
<protein>
    <recommendedName>
        <fullName evidence="1">RNA 2',3'-cyclic phosphodiesterase</fullName>
        <shortName evidence="1">RNA 2',3'-CPDase</shortName>
        <ecNumber evidence="1">3.1.4.58</ecNumber>
    </recommendedName>
</protein>
<feature type="chain" id="PRO_0000138964" description="RNA 2',3'-cyclic phosphodiesterase">
    <location>
        <begin position="1"/>
        <end position="184"/>
    </location>
</feature>
<feature type="short sequence motif" description="HXTX 1" evidence="1">
    <location>
        <begin position="42"/>
        <end position="45"/>
    </location>
</feature>
<feature type="short sequence motif" description="HXTX 2" evidence="1">
    <location>
        <begin position="127"/>
        <end position="130"/>
    </location>
</feature>
<feature type="active site" description="Proton donor" evidence="1">
    <location>
        <position position="42"/>
    </location>
</feature>
<feature type="active site" description="Proton acceptor" evidence="1">
    <location>
        <position position="127"/>
    </location>
</feature>
<accession>O26683</accession>
<gene>
    <name type="ordered locus">MTH_583</name>
</gene>
<keyword id="KW-0378">Hydrolase</keyword>
<keyword id="KW-1185">Reference proteome</keyword>
<sequence length="184" mass="21107">MKVRAFLAVDLDEGLRDHVSRIQDTLKSADAQVKFVEPENLHFTLKFFGDVGEGKLRRIENVVRDTLRGYEPFEISIRGAGVFPNPRYIRVVWLGVENPETFSDLQRSLDMEFVKMGFRPERDYVPHLTVGRVKGPRNRDKLAELIGELQNVEVGSMRVSEVSLKRSELTPAGPIYTDMEVFRL</sequence>
<comment type="function">
    <text evidence="1">Hydrolyzes RNA 2',3'-cyclic phosphodiester to an RNA 2'-phosphomonoester.</text>
</comment>
<comment type="catalytic activity">
    <reaction evidence="1">
        <text>a 3'-end 2',3'-cyclophospho-ribonucleotide-RNA + H2O = a 3'-end 2'-phospho-ribonucleotide-RNA + H(+)</text>
        <dbReference type="Rhea" id="RHEA:11828"/>
        <dbReference type="Rhea" id="RHEA-COMP:10464"/>
        <dbReference type="Rhea" id="RHEA-COMP:17353"/>
        <dbReference type="ChEBI" id="CHEBI:15377"/>
        <dbReference type="ChEBI" id="CHEBI:15378"/>
        <dbReference type="ChEBI" id="CHEBI:83064"/>
        <dbReference type="ChEBI" id="CHEBI:173113"/>
        <dbReference type="EC" id="3.1.4.58"/>
    </reaction>
</comment>
<comment type="similarity">
    <text evidence="1">Belongs to the 2H phosphoesterase superfamily. ThpR family.</text>
</comment>
<reference key="1">
    <citation type="journal article" date="1997" name="J. Bacteriol.">
        <title>Complete genome sequence of Methanobacterium thermoautotrophicum deltaH: functional analysis and comparative genomics.</title>
        <authorList>
            <person name="Smith D.R."/>
            <person name="Doucette-Stamm L.A."/>
            <person name="Deloughery C."/>
            <person name="Lee H.-M."/>
            <person name="Dubois J."/>
            <person name="Aldredge T."/>
            <person name="Bashirzadeh R."/>
            <person name="Blakely D."/>
            <person name="Cook R."/>
            <person name="Gilbert K."/>
            <person name="Harrison D."/>
            <person name="Hoang L."/>
            <person name="Keagle P."/>
            <person name="Lumm W."/>
            <person name="Pothier B."/>
            <person name="Qiu D."/>
            <person name="Spadafora R."/>
            <person name="Vicare R."/>
            <person name="Wang Y."/>
            <person name="Wierzbowski J."/>
            <person name="Gibson R."/>
            <person name="Jiwani N."/>
            <person name="Caruso A."/>
            <person name="Bush D."/>
            <person name="Safer H."/>
            <person name="Patwell D."/>
            <person name="Prabhakar S."/>
            <person name="McDougall S."/>
            <person name="Shimer G."/>
            <person name="Goyal A."/>
            <person name="Pietrovski S."/>
            <person name="Church G.M."/>
            <person name="Daniels C.J."/>
            <person name="Mao J.-I."/>
            <person name="Rice P."/>
            <person name="Noelling J."/>
            <person name="Reeve J.N."/>
        </authorList>
    </citation>
    <scope>NUCLEOTIDE SEQUENCE [LARGE SCALE GENOMIC DNA]</scope>
    <source>
        <strain>ATCC 29096 / DSM 1053 / JCM 10044 / NBRC 100330 / Delta H</strain>
    </source>
</reference>